<evidence type="ECO:0000255" key="1">
    <source>
        <dbReference type="HAMAP-Rule" id="MF_00821"/>
    </source>
</evidence>
<comment type="function">
    <text evidence="1">One of the proteins required for the normal export of preproteins out of the cell cytoplasm. It is a molecular chaperone that binds to a subset of precursor proteins, maintaining them in a translocation-competent state. It also specifically binds to its receptor SecA.</text>
</comment>
<comment type="subunit">
    <text evidence="1">Homotetramer, a dimer of dimers. One homotetramer interacts with 1 SecA dimer.</text>
</comment>
<comment type="subcellular location">
    <subcellularLocation>
        <location evidence="1">Cytoplasm</location>
    </subcellularLocation>
</comment>
<comment type="similarity">
    <text evidence="1">Belongs to the SecB family.</text>
</comment>
<accession>B7NPB8</accession>
<gene>
    <name evidence="1" type="primary">secB</name>
    <name type="ordered locus">ECIAI39_4130</name>
</gene>
<dbReference type="EMBL" id="CU928164">
    <property type="protein sequence ID" value="CAR20238.1"/>
    <property type="molecule type" value="Genomic_DNA"/>
</dbReference>
<dbReference type="RefSeq" id="WP_000003377.1">
    <property type="nucleotide sequence ID" value="NC_011750.1"/>
</dbReference>
<dbReference type="RefSeq" id="YP_002410007.1">
    <property type="nucleotide sequence ID" value="NC_011750.1"/>
</dbReference>
<dbReference type="SMR" id="B7NPB8"/>
<dbReference type="STRING" id="585057.ECIAI39_4130"/>
<dbReference type="GeneID" id="86944403"/>
<dbReference type="KEGG" id="ect:ECIAI39_4130"/>
<dbReference type="PATRIC" id="fig|585057.6.peg.4280"/>
<dbReference type="HOGENOM" id="CLU_111574_1_0_6"/>
<dbReference type="Proteomes" id="UP000000749">
    <property type="component" value="Chromosome"/>
</dbReference>
<dbReference type="GO" id="GO:0005737">
    <property type="term" value="C:cytoplasm"/>
    <property type="evidence" value="ECO:0007669"/>
    <property type="project" value="UniProtKB-SubCell"/>
</dbReference>
<dbReference type="GO" id="GO:0051082">
    <property type="term" value="F:unfolded protein binding"/>
    <property type="evidence" value="ECO:0007669"/>
    <property type="project" value="InterPro"/>
</dbReference>
<dbReference type="GO" id="GO:0006457">
    <property type="term" value="P:protein folding"/>
    <property type="evidence" value="ECO:0007669"/>
    <property type="project" value="UniProtKB-UniRule"/>
</dbReference>
<dbReference type="GO" id="GO:0051262">
    <property type="term" value="P:protein tetramerization"/>
    <property type="evidence" value="ECO:0007669"/>
    <property type="project" value="InterPro"/>
</dbReference>
<dbReference type="GO" id="GO:0015031">
    <property type="term" value="P:protein transport"/>
    <property type="evidence" value="ECO:0007669"/>
    <property type="project" value="UniProtKB-UniRule"/>
</dbReference>
<dbReference type="CDD" id="cd00557">
    <property type="entry name" value="Translocase_SecB"/>
    <property type="match status" value="1"/>
</dbReference>
<dbReference type="FunFam" id="3.10.420.10:FF:000001">
    <property type="entry name" value="Protein-export chaperone SecB"/>
    <property type="match status" value="1"/>
</dbReference>
<dbReference type="Gene3D" id="3.10.420.10">
    <property type="entry name" value="SecB-like"/>
    <property type="match status" value="1"/>
</dbReference>
<dbReference type="HAMAP" id="MF_00821">
    <property type="entry name" value="SecB"/>
    <property type="match status" value="1"/>
</dbReference>
<dbReference type="InterPro" id="IPR003708">
    <property type="entry name" value="SecB"/>
</dbReference>
<dbReference type="InterPro" id="IPR035958">
    <property type="entry name" value="SecB-like_sf"/>
</dbReference>
<dbReference type="NCBIfam" id="NF004390">
    <property type="entry name" value="PRK05751.1-1"/>
    <property type="match status" value="1"/>
</dbReference>
<dbReference type="NCBIfam" id="NF004393">
    <property type="entry name" value="PRK05751.1-4"/>
    <property type="match status" value="1"/>
</dbReference>
<dbReference type="NCBIfam" id="TIGR00809">
    <property type="entry name" value="secB"/>
    <property type="match status" value="1"/>
</dbReference>
<dbReference type="PANTHER" id="PTHR36918">
    <property type="match status" value="1"/>
</dbReference>
<dbReference type="PANTHER" id="PTHR36918:SF1">
    <property type="entry name" value="PROTEIN-EXPORT PROTEIN SECB"/>
    <property type="match status" value="1"/>
</dbReference>
<dbReference type="Pfam" id="PF02556">
    <property type="entry name" value="SecB"/>
    <property type="match status" value="1"/>
</dbReference>
<dbReference type="PRINTS" id="PR01594">
    <property type="entry name" value="SECBCHAPRONE"/>
</dbReference>
<dbReference type="SUPFAM" id="SSF54611">
    <property type="entry name" value="SecB-like"/>
    <property type="match status" value="1"/>
</dbReference>
<feature type="chain" id="PRO_1000195322" description="Protein-export protein SecB">
    <location>
        <begin position="1"/>
        <end position="155"/>
    </location>
</feature>
<organism>
    <name type="scientific">Escherichia coli O7:K1 (strain IAI39 / ExPEC)</name>
    <dbReference type="NCBI Taxonomy" id="585057"/>
    <lineage>
        <taxon>Bacteria</taxon>
        <taxon>Pseudomonadati</taxon>
        <taxon>Pseudomonadota</taxon>
        <taxon>Gammaproteobacteria</taxon>
        <taxon>Enterobacterales</taxon>
        <taxon>Enterobacteriaceae</taxon>
        <taxon>Escherichia</taxon>
    </lineage>
</organism>
<proteinExistence type="inferred from homology"/>
<sequence>MSEQNNTEMTFQIQRIYTKDISFEAPNAPHVFQKDWQPEVKLDLDTASSQLADDVYEVVLRVTVTASLGEETAFLCEVQQGGIFSIAGIEGTQMAHCLGAYCPNILFPYARECITSMVSRGTFPQLNLAPVNFDALFMNYLQQQAGEGTEEHQDA</sequence>
<reference key="1">
    <citation type="journal article" date="2009" name="PLoS Genet.">
        <title>Organised genome dynamics in the Escherichia coli species results in highly diverse adaptive paths.</title>
        <authorList>
            <person name="Touchon M."/>
            <person name="Hoede C."/>
            <person name="Tenaillon O."/>
            <person name="Barbe V."/>
            <person name="Baeriswyl S."/>
            <person name="Bidet P."/>
            <person name="Bingen E."/>
            <person name="Bonacorsi S."/>
            <person name="Bouchier C."/>
            <person name="Bouvet O."/>
            <person name="Calteau A."/>
            <person name="Chiapello H."/>
            <person name="Clermont O."/>
            <person name="Cruveiller S."/>
            <person name="Danchin A."/>
            <person name="Diard M."/>
            <person name="Dossat C."/>
            <person name="Karoui M.E."/>
            <person name="Frapy E."/>
            <person name="Garry L."/>
            <person name="Ghigo J.M."/>
            <person name="Gilles A.M."/>
            <person name="Johnson J."/>
            <person name="Le Bouguenec C."/>
            <person name="Lescat M."/>
            <person name="Mangenot S."/>
            <person name="Martinez-Jehanne V."/>
            <person name="Matic I."/>
            <person name="Nassif X."/>
            <person name="Oztas S."/>
            <person name="Petit M.A."/>
            <person name="Pichon C."/>
            <person name="Rouy Z."/>
            <person name="Ruf C.S."/>
            <person name="Schneider D."/>
            <person name="Tourret J."/>
            <person name="Vacherie B."/>
            <person name="Vallenet D."/>
            <person name="Medigue C."/>
            <person name="Rocha E.P.C."/>
            <person name="Denamur E."/>
        </authorList>
    </citation>
    <scope>NUCLEOTIDE SEQUENCE [LARGE SCALE GENOMIC DNA]</scope>
    <source>
        <strain>IAI39 / ExPEC</strain>
    </source>
</reference>
<protein>
    <recommendedName>
        <fullName evidence="1">Protein-export protein SecB</fullName>
    </recommendedName>
</protein>
<name>SECB_ECO7I</name>
<keyword id="KW-0143">Chaperone</keyword>
<keyword id="KW-0963">Cytoplasm</keyword>
<keyword id="KW-0653">Protein transport</keyword>
<keyword id="KW-0811">Translocation</keyword>
<keyword id="KW-0813">Transport</keyword>